<accession>G7CFI3</accession>
<organism>
    <name type="scientific">Mycolicibacterium thermoresistibile (strain ATCC 19527 / DSM 44167 / CIP 105390 / JCM 6362 / NCTC 10409 / 316)</name>
    <name type="common">Mycobacterium thermoresistibile</name>
    <dbReference type="NCBI Taxonomy" id="1078020"/>
    <lineage>
        <taxon>Bacteria</taxon>
        <taxon>Bacillati</taxon>
        <taxon>Actinomycetota</taxon>
        <taxon>Actinomycetes</taxon>
        <taxon>Mycobacteriales</taxon>
        <taxon>Mycobacteriaceae</taxon>
        <taxon>Mycolicibacterium</taxon>
    </lineage>
</organism>
<dbReference type="EC" id="1.14.99.50" evidence="2"/>
<dbReference type="EMBL" id="AGVE01000042">
    <property type="protein sequence ID" value="EHI13262.1"/>
    <property type="molecule type" value="Genomic_DNA"/>
</dbReference>
<dbReference type="PDB" id="4X8B">
    <property type="method" value="X-ray"/>
    <property type="resolution" value="1.70 A"/>
    <property type="chains" value="A/B=3-446"/>
</dbReference>
<dbReference type="PDB" id="4X8D">
    <property type="method" value="X-ray"/>
    <property type="resolution" value="1.98 A"/>
    <property type="chains" value="A/B=3-446"/>
</dbReference>
<dbReference type="PDB" id="4X8E">
    <property type="method" value="X-ray"/>
    <property type="resolution" value="1.60 A"/>
    <property type="chains" value="A/B=3-446"/>
</dbReference>
<dbReference type="PDBsum" id="4X8B"/>
<dbReference type="PDBsum" id="4X8D"/>
<dbReference type="PDBsum" id="4X8E"/>
<dbReference type="SMR" id="G7CFI3"/>
<dbReference type="PATRIC" id="fig|1078020.3.peg.1721"/>
<dbReference type="eggNOG" id="COG1262">
    <property type="taxonomic scope" value="Bacteria"/>
</dbReference>
<dbReference type="BRENDA" id="1.14.99.50">
    <property type="organism ID" value="3515"/>
</dbReference>
<dbReference type="UniPathway" id="UPA01014"/>
<dbReference type="EvolutionaryTrace" id="G7CFI3"/>
<dbReference type="Proteomes" id="UP000004915">
    <property type="component" value="Unassembled WGS sequence"/>
</dbReference>
<dbReference type="GO" id="GO:0044875">
    <property type="term" value="F:gamma-glutamyl hercynylcysteine sulfoxide synthase activity"/>
    <property type="evidence" value="ECO:0007669"/>
    <property type="project" value="UniProtKB-EC"/>
</dbReference>
<dbReference type="GO" id="GO:0005506">
    <property type="term" value="F:iron ion binding"/>
    <property type="evidence" value="ECO:0007669"/>
    <property type="project" value="UniProtKB-UniRule"/>
</dbReference>
<dbReference type="Gene3D" id="3.90.1580.10">
    <property type="entry name" value="paralog of FGE (formylglycine-generating enzyme)"/>
    <property type="match status" value="1"/>
</dbReference>
<dbReference type="HAMAP" id="MF_02035">
    <property type="entry name" value="EgtB"/>
    <property type="match status" value="1"/>
</dbReference>
<dbReference type="InterPro" id="IPR016187">
    <property type="entry name" value="CTDL_fold"/>
</dbReference>
<dbReference type="InterPro" id="IPR024775">
    <property type="entry name" value="DinB-like"/>
</dbReference>
<dbReference type="InterPro" id="IPR034660">
    <property type="entry name" value="DinB/YfiT-like"/>
</dbReference>
<dbReference type="InterPro" id="IPR017806">
    <property type="entry name" value="EgtB"/>
</dbReference>
<dbReference type="InterPro" id="IPR032890">
    <property type="entry name" value="EgtB_Actinobacteria"/>
</dbReference>
<dbReference type="InterPro" id="IPR051043">
    <property type="entry name" value="Sulfatase_Mod_Factor_Kinase"/>
</dbReference>
<dbReference type="InterPro" id="IPR005532">
    <property type="entry name" value="SUMF_dom"/>
</dbReference>
<dbReference type="InterPro" id="IPR042095">
    <property type="entry name" value="SUMF_sf"/>
</dbReference>
<dbReference type="NCBIfam" id="TIGR03440">
    <property type="entry name" value="egtB_TIGR03440"/>
    <property type="match status" value="1"/>
</dbReference>
<dbReference type="PANTHER" id="PTHR23150:SF36">
    <property type="entry name" value="HERCYNINE OXYGENASE"/>
    <property type="match status" value="1"/>
</dbReference>
<dbReference type="PANTHER" id="PTHR23150">
    <property type="entry name" value="SULFATASE MODIFYING FACTOR 1, 2"/>
    <property type="match status" value="1"/>
</dbReference>
<dbReference type="Pfam" id="PF12867">
    <property type="entry name" value="DinB_2"/>
    <property type="match status" value="1"/>
</dbReference>
<dbReference type="Pfam" id="PF03781">
    <property type="entry name" value="FGE-sulfatase"/>
    <property type="match status" value="1"/>
</dbReference>
<dbReference type="SUPFAM" id="SSF56436">
    <property type="entry name" value="C-type lectin-like"/>
    <property type="match status" value="1"/>
</dbReference>
<dbReference type="SUPFAM" id="SSF109854">
    <property type="entry name" value="DinB/YfiT-like putative metalloenzymes"/>
    <property type="match status" value="1"/>
</dbReference>
<sequence length="446" mass="49412">MTGVAVPHRAELARQLIDARNRTLRLVDFDDAELRRQYDPLMSPLVWDLAHIGQQEELWLLRGGDPRRPGLLEPAVEQLYDAFVHPRASRVHLPLLSPAQARRFCATVRSAVLDALDRLPEDADTFAFGMVVSHEHQHDETMLQALNLRSGEPLLGSGTALPPGRPGVAGTSVLVPGGPFVLGVDLADEPYALDNERPAHVVDVPAFRIGRVPVTNAEWRAFIDDGGYRQRRWWSDAGWAYRCEAGLTAPQFWNPDGTRTRFGHVEDIPPDEPVQHVTYFEAEAYAAWAGARLPTEIEWEKACAWDPATGRRRRYPWGDAAPTAALANLGGDALRPAPVGAYPAGASACGAEQMLGDVWEWTSSPLRPWPGFTPMIYQRYSQPFFEGAGSGDYRVLRGGSWAVAADILRPSFRNWDHPIRRQIFAGVRLAWDVDRQTARPGPVGGC</sequence>
<protein>
    <recommendedName>
        <fullName>Hercynine oxygenase</fullName>
        <ecNumber evidence="2">1.14.99.50</ecNumber>
    </recommendedName>
    <alternativeName>
        <fullName evidence="1">Gamma-glutamyl hercynylcysteine S-oxide synthase</fullName>
    </alternativeName>
    <alternativeName>
        <fullName evidence="3">Sulfoxide synthase EgtB</fullName>
    </alternativeName>
</protein>
<gene>
    <name evidence="1" type="primary">egtB</name>
    <name evidence="6" type="ORF">KEK_08772</name>
</gene>
<reference key="1">
    <citation type="submission" date="2011-11" db="EMBL/GenBank/DDBJ databases">
        <authorList>
            <consortium name="Tuberculosis Structural Genomics Consortium"/>
            <person name="Ioerger T.R."/>
        </authorList>
    </citation>
    <scope>NUCLEOTIDE SEQUENCE [LARGE SCALE GENOMIC DNA]</scope>
    <source>
        <strain>ATCC 19527 / DSM 44167 / CIP 105390 / JCM 6362 / NCTC 10409 / 316</strain>
    </source>
</reference>
<reference key="2">
    <citation type="journal article" date="2015" name="Angew. Chem. Int. Ed.">
        <title>Structure of the sulfoxide synthase EgtB from the ergothioneine biosynthetic pathway.</title>
        <authorList>
            <person name="Goncharenko K.V."/>
            <person name="Vit A."/>
            <person name="Blankenfeldt W."/>
            <person name="Seebeck F.P."/>
        </authorList>
    </citation>
    <scope>X-RAY CRYSTALLOGRAPHY (1.60 ANGSTROMS) OF 3-446 IN COMPLEXES WITH N,N,N-TRIMETHYL-HISTIDINE; IRON; GAMMA-GLUTAMYLCYSTEINE; MANGANESE AND N,N-DIMETHYL-HISTIDINE</scope>
    <scope>FUNCTION</scope>
    <scope>CATALYTIC ACTIVITY</scope>
    <scope>COFACTOR</scope>
    <scope>BIOPHYSICOCHEMICAL PROPERTIES</scope>
    <scope>SUBUNIT</scope>
    <scope>REACTION MECHANISM</scope>
    <scope>MUTAGENESIS OF ASP-416</scope>
</reference>
<feature type="chain" id="PRO_0000433563" description="Hercynine oxygenase">
    <location>
        <begin position="1"/>
        <end position="446"/>
    </location>
</feature>
<feature type="binding site" evidence="2 8">
    <location>
        <position position="51"/>
    </location>
    <ligand>
        <name>Fe cation</name>
        <dbReference type="ChEBI" id="CHEBI:24875"/>
    </ligand>
</feature>
<feature type="binding site" evidence="2 7">
    <location>
        <begin position="87"/>
        <end position="90"/>
    </location>
    <ligand>
        <name>gamma-L-glutamyl-L-cysteine</name>
        <dbReference type="ChEBI" id="CHEBI:58173"/>
    </ligand>
</feature>
<feature type="binding site" evidence="2 8">
    <location>
        <position position="134"/>
    </location>
    <ligand>
        <name>Fe cation</name>
        <dbReference type="ChEBI" id="CHEBI:24875"/>
    </ligand>
</feature>
<feature type="binding site" evidence="2 8">
    <location>
        <position position="138"/>
    </location>
    <ligand>
        <name>Fe cation</name>
        <dbReference type="ChEBI" id="CHEBI:24875"/>
    </ligand>
</feature>
<feature type="binding site" evidence="2 7">
    <location>
        <position position="416"/>
    </location>
    <ligand>
        <name>gamma-L-glutamyl-L-cysteine</name>
        <dbReference type="ChEBI" id="CHEBI:58173"/>
    </ligand>
</feature>
<feature type="binding site" evidence="2 7">
    <location>
        <position position="420"/>
    </location>
    <ligand>
        <name>gamma-L-glutamyl-L-cysteine</name>
        <dbReference type="ChEBI" id="CHEBI:58173"/>
    </ligand>
</feature>
<feature type="mutagenesis site" description="200-fold reduction in affinity for gamma-glutamylcysteine, but no significant change in that for hercynine and in the reaction rate. Modifies the sulfur donor specificity since N-glutaryl-cysteine is a 10-fold better substrate than gamma-L-glutamyl-cysteine in the mutant." evidence="2">
    <original>D</original>
    <variation>N</variation>
    <location>
        <position position="416"/>
    </location>
</feature>
<feature type="helix" evidence="9">
    <location>
        <begin position="9"/>
        <end position="26"/>
    </location>
</feature>
<feature type="helix" evidence="9">
    <location>
        <begin position="31"/>
        <end position="35"/>
    </location>
</feature>
<feature type="helix" evidence="9">
    <location>
        <begin position="45"/>
        <end position="60"/>
    </location>
</feature>
<feature type="helix" evidence="9">
    <location>
        <begin position="74"/>
        <end position="77"/>
    </location>
</feature>
<feature type="helix" evidence="9">
    <location>
        <begin position="78"/>
        <end position="80"/>
    </location>
</feature>
<feature type="turn" evidence="9">
    <location>
        <begin position="82"/>
        <end position="84"/>
    </location>
</feature>
<feature type="helix" evidence="9">
    <location>
        <begin position="87"/>
        <end position="92"/>
    </location>
</feature>
<feature type="helix" evidence="9">
    <location>
        <begin position="98"/>
        <end position="118"/>
    </location>
</feature>
<feature type="helix" evidence="9">
    <location>
        <begin position="126"/>
        <end position="148"/>
    </location>
</feature>
<feature type="strand" evidence="9">
    <location>
        <begin position="172"/>
        <end position="175"/>
    </location>
</feature>
<feature type="strand" evidence="9">
    <location>
        <begin position="178"/>
        <end position="183"/>
    </location>
</feature>
<feature type="turn" evidence="9">
    <location>
        <begin position="186"/>
        <end position="188"/>
    </location>
</feature>
<feature type="helix" evidence="9">
    <location>
        <begin position="194"/>
        <end position="196"/>
    </location>
</feature>
<feature type="strand" evidence="9">
    <location>
        <begin position="200"/>
        <end position="204"/>
    </location>
</feature>
<feature type="strand" evidence="9">
    <location>
        <begin position="207"/>
        <end position="212"/>
    </location>
</feature>
<feature type="helix" evidence="9">
    <location>
        <begin position="216"/>
        <end position="224"/>
    </location>
</feature>
<feature type="helix" evidence="9">
    <location>
        <begin position="227"/>
        <end position="229"/>
    </location>
</feature>
<feature type="helix" evidence="9">
    <location>
        <begin position="231"/>
        <end position="233"/>
    </location>
</feature>
<feature type="helix" evidence="9">
    <location>
        <begin position="236"/>
        <end position="245"/>
    </location>
</feature>
<feature type="strand" evidence="9">
    <location>
        <begin position="257"/>
        <end position="261"/>
    </location>
</feature>
<feature type="strand" evidence="9">
    <location>
        <begin position="264"/>
        <end position="267"/>
    </location>
</feature>
<feature type="helix" evidence="9">
    <location>
        <begin position="279"/>
        <end position="289"/>
    </location>
</feature>
<feature type="helix" evidence="9">
    <location>
        <begin position="296"/>
        <end position="304"/>
    </location>
</feature>
<feature type="turn" evidence="9">
    <location>
        <begin position="307"/>
        <end position="310"/>
    </location>
</feature>
<feature type="strand" evidence="9">
    <location>
        <begin position="318"/>
        <end position="320"/>
    </location>
</feature>
<feature type="turn" evidence="9">
    <location>
        <begin position="324"/>
        <end position="326"/>
    </location>
</feature>
<feature type="strand" evidence="9">
    <location>
        <begin position="330"/>
        <end position="335"/>
    </location>
</feature>
<feature type="helix" evidence="9">
    <location>
        <begin position="343"/>
        <end position="345"/>
    </location>
</feature>
<feature type="strand" evidence="9">
    <location>
        <begin position="355"/>
        <end position="361"/>
    </location>
</feature>
<feature type="turn" evidence="9">
    <location>
        <begin position="378"/>
        <end position="381"/>
    </location>
</feature>
<feature type="helix" evidence="9">
    <location>
        <begin position="382"/>
        <end position="384"/>
    </location>
</feature>
<feature type="strand" evidence="9">
    <location>
        <begin position="388"/>
        <end position="390"/>
    </location>
</feature>
<feature type="strand" evidence="9">
    <location>
        <begin position="394"/>
        <end position="398"/>
    </location>
</feature>
<feature type="helix" evidence="9">
    <location>
        <begin position="405"/>
        <end position="407"/>
    </location>
</feature>
<feature type="strand" evidence="9">
    <location>
        <begin position="414"/>
        <end position="416"/>
    </location>
</feature>
<feature type="strand" evidence="9">
    <location>
        <begin position="422"/>
        <end position="426"/>
    </location>
</feature>
<feature type="strand" evidence="9">
    <location>
        <begin position="430"/>
        <end position="432"/>
    </location>
</feature>
<keyword id="KW-0002">3D-structure</keyword>
<keyword id="KW-0408">Iron</keyword>
<keyword id="KW-0479">Metal-binding</keyword>
<keyword id="KW-0503">Monooxygenase</keyword>
<keyword id="KW-0560">Oxidoreductase</keyword>
<keyword id="KW-1185">Reference proteome</keyword>
<comment type="function">
    <text evidence="2">Catalyzes the oxidative sulfurization of hercynine (N-alpha,N-alpha,N-alpha-trimethyl-L-histidine) into hercynyl-gamma-L-glutamyl-L-cysteine sulfoxide, a step in the biosynthesis pathway of ergothioneine.</text>
</comment>
<comment type="catalytic activity">
    <reaction evidence="2">
        <text>gamma-L-glutamyl-L-cysteine + hercynine + O2 = gamma-L-glutamyl-hercynylcysteine S-oxide + H2O</text>
        <dbReference type="Rhea" id="RHEA:42672"/>
        <dbReference type="ChEBI" id="CHEBI:15377"/>
        <dbReference type="ChEBI" id="CHEBI:15379"/>
        <dbReference type="ChEBI" id="CHEBI:15781"/>
        <dbReference type="ChEBI" id="CHEBI:58173"/>
        <dbReference type="ChEBI" id="CHEBI:82703"/>
        <dbReference type="EC" id="1.14.99.50"/>
    </reaction>
</comment>
<comment type="cofactor">
    <cofactor evidence="2">
        <name>Fe(2+)</name>
        <dbReference type="ChEBI" id="CHEBI:29033"/>
    </cofactor>
</comment>
<comment type="biophysicochemical properties">
    <kinetics>
        <KM evidence="2">39 uM for hercynine</KM>
        <KM evidence="2">44 uM for gamma-L-glutamyl-cysteine</KM>
        <KM evidence="2">1.1 mM for N-glutaryl-cysteine</KM>
        <text evidence="2">kcat is 0.87 sec(-1) for the oxidative sulfurization of hercynine with gamma-L-glutamyl-L-cysteine as sulfur donor. kcat is 0.25 sec(-1) for the oxidative sulfurization of hercynine with N-glutaryl-cysteine as sulfur donor.</text>
    </kinetics>
</comment>
<comment type="pathway">
    <text evidence="5">Amino-acid biosynthesis; ergothioneine biosynthesis.</text>
</comment>
<comment type="subunit">
    <text evidence="2">Monomer.</text>
</comment>
<comment type="similarity">
    <text evidence="4">Belongs to the EgtB family.</text>
</comment>
<evidence type="ECO:0000255" key="1">
    <source>
        <dbReference type="HAMAP-Rule" id="MF_02035"/>
    </source>
</evidence>
<evidence type="ECO:0000269" key="2">
    <source>
    </source>
</evidence>
<evidence type="ECO:0000303" key="3">
    <source>
    </source>
</evidence>
<evidence type="ECO:0000305" key="4"/>
<evidence type="ECO:0000305" key="5">
    <source>
    </source>
</evidence>
<evidence type="ECO:0000312" key="6">
    <source>
        <dbReference type="EMBL" id="EHI13262.1"/>
    </source>
</evidence>
<evidence type="ECO:0007744" key="7">
    <source>
        <dbReference type="PDB" id="4X8D"/>
    </source>
</evidence>
<evidence type="ECO:0007744" key="8">
    <source>
        <dbReference type="PDB" id="4X8E"/>
    </source>
</evidence>
<evidence type="ECO:0007829" key="9">
    <source>
        <dbReference type="PDB" id="4X8E"/>
    </source>
</evidence>
<name>EGTB_MYCT3</name>
<proteinExistence type="evidence at protein level"/>